<comment type="function">
    <text evidence="1 2 3 7">Potent antimicrobial peptide with activity against bacteria and protozoa (By similarity). Also has activity against fungi (PubMed:8306981). Probably acts by disturbing membrane functions with its amphipathic structure (Probable). Binds to healthy erythrocytes (this binding is receptor independent), but has very weak hemolytic activity (PubMed:9395500). Does not bind to P.falciparum infected erythrocytes, but accumulates within the parasite (PubMed:9395500). Kills the parasite, but has no hemolytic activity on the host cell (PubMed:9395500).</text>
</comment>
<comment type="subunit">
    <text evidence="3">Monomer and oligomer. Forms aggregates in aqueous environments.</text>
</comment>
<comment type="subcellular location">
    <subcellularLocation>
        <location evidence="2">Secreted</location>
    </subcellularLocation>
</comment>
<comment type="tissue specificity">
    <text evidence="8">Expressed by the skin glands.</text>
</comment>
<comment type="similarity">
    <text evidence="7">Belongs to the frog skin active peptide (FSAP) family. Dermaseptin subfamily.</text>
</comment>
<comment type="online information" name="The antimicrobial peptide database">
    <link uri="https://wangapd3.com/database/query_output.php?ID=0159"/>
</comment>
<accession>P80279</accession>
<name>DRS3_PHYSA</name>
<reference key="1">
    <citation type="journal article" date="1994" name="Eur. J. Biochem.">
        <title>Isolation and structure of novel defensive peptides from frog skin.</title>
        <authorList>
            <person name="Mor A."/>
            <person name="Nicolas P."/>
        </authorList>
    </citation>
    <scope>PROTEIN SEQUENCE</scope>
    <scope>FUNCTION</scope>
    <scope>SUBCELLULAR LOCATION</scope>
    <source>
        <tissue>Skin secretion</tissue>
    </source>
</reference>
<reference key="2">
    <citation type="journal article" date="1997" name="J. Biol. Chem.">
        <title>Selective cytotoxicity of dermaseptin S3 toward intraerythrocytic Plasmodium falciparum and the underlying molecular basis.</title>
        <authorList>
            <person name="Ghosh J.K."/>
            <person name="Shaool D."/>
            <person name="Guillaud P."/>
            <person name="Ciceron L."/>
            <person name="Mazier D."/>
            <person name="Kustanovich I."/>
            <person name="Shai Y."/>
            <person name="Mor A."/>
        </authorList>
    </citation>
    <scope>FUNCTION</scope>
    <scope>SUBUNIT</scope>
</reference>
<reference key="3">
    <citation type="journal article" date="2008" name="Peptides">
        <title>A consistent nomenclature of antimicrobial peptides isolated from frogs of the subfamily Phyllomedusinae.</title>
        <authorList>
            <person name="Amiche M."/>
            <person name="Ladram A."/>
            <person name="Nicolas P."/>
        </authorList>
    </citation>
    <scope>NOMENCLATURE</scope>
</reference>
<proteinExistence type="evidence at protein level"/>
<feature type="peptide" id="PRO_0000043641" description="Dermaseptin-S3" evidence="2">
    <location>
        <begin position="1"/>
        <end position="30"/>
    </location>
</feature>
<keyword id="KW-0878">Amphibian defense peptide</keyword>
<keyword id="KW-0044">Antibiotic</keyword>
<keyword id="KW-0929">Antimicrobial</keyword>
<keyword id="KW-0903">Direct protein sequencing</keyword>
<keyword id="KW-0295">Fungicide</keyword>
<keyword id="KW-0964">Secreted</keyword>
<evidence type="ECO:0000250" key="1">
    <source>
        <dbReference type="UniProtKB" id="P24302"/>
    </source>
</evidence>
<evidence type="ECO:0000269" key="2">
    <source>
    </source>
</evidence>
<evidence type="ECO:0000269" key="3">
    <source>
    </source>
</evidence>
<evidence type="ECO:0000303" key="4">
    <source>
    </source>
</evidence>
<evidence type="ECO:0000303" key="5">
    <source>
    </source>
</evidence>
<evidence type="ECO:0000303" key="6">
    <source>
    </source>
</evidence>
<evidence type="ECO:0000305" key="7"/>
<evidence type="ECO:0000305" key="8">
    <source>
    </source>
</evidence>
<dbReference type="GO" id="GO:0005576">
    <property type="term" value="C:extracellular region"/>
    <property type="evidence" value="ECO:0007669"/>
    <property type="project" value="UniProtKB-SubCell"/>
</dbReference>
<dbReference type="GO" id="GO:0042742">
    <property type="term" value="P:defense response to bacterium"/>
    <property type="evidence" value="ECO:0007669"/>
    <property type="project" value="UniProtKB-KW"/>
</dbReference>
<dbReference type="GO" id="GO:0050832">
    <property type="term" value="P:defense response to fungus"/>
    <property type="evidence" value="ECO:0007669"/>
    <property type="project" value="UniProtKB-KW"/>
</dbReference>
<dbReference type="GO" id="GO:0031640">
    <property type="term" value="P:killing of cells of another organism"/>
    <property type="evidence" value="ECO:0007669"/>
    <property type="project" value="UniProtKB-KW"/>
</dbReference>
<dbReference type="InterPro" id="IPR022731">
    <property type="entry name" value="Dermaseptin_dom"/>
</dbReference>
<dbReference type="Pfam" id="PF12121">
    <property type="entry name" value="DD_K"/>
    <property type="match status" value="1"/>
</dbReference>
<organism>
    <name type="scientific">Phyllomedusa sauvagei</name>
    <name type="common">Sauvage's leaf frog</name>
    <dbReference type="NCBI Taxonomy" id="8395"/>
    <lineage>
        <taxon>Eukaryota</taxon>
        <taxon>Metazoa</taxon>
        <taxon>Chordata</taxon>
        <taxon>Craniata</taxon>
        <taxon>Vertebrata</taxon>
        <taxon>Euteleostomi</taxon>
        <taxon>Amphibia</taxon>
        <taxon>Batrachia</taxon>
        <taxon>Anura</taxon>
        <taxon>Neobatrachia</taxon>
        <taxon>Hyloidea</taxon>
        <taxon>Hylidae</taxon>
        <taxon>Phyllomedusinae</taxon>
        <taxon>Phyllomedusa</taxon>
    </lineage>
</organism>
<protein>
    <recommendedName>
        <fullName evidence="4 6">Dermaseptin-S3</fullName>
        <shortName evidence="4">DRS-S3</shortName>
    </recommendedName>
    <alternativeName>
        <fullName evidence="5">Dermaseptin III</fullName>
        <shortName evidence="5">DS III</shortName>
    </alternativeName>
    <alternativeName>
        <fullName>Dermaseptin-3</fullName>
        <shortName>DS3</shortName>
    </alternativeName>
</protein>
<sequence length="30" mass="3024">ALWKNMLKGIGKLAGKAALGAVKKLVGAES</sequence>